<organism>
    <name type="scientific">Synechocystis sp. (strain ATCC 27184 / PCC 6803 / Kazusa)</name>
    <dbReference type="NCBI Taxonomy" id="1111708"/>
    <lineage>
        <taxon>Bacteria</taxon>
        <taxon>Bacillati</taxon>
        <taxon>Cyanobacteriota</taxon>
        <taxon>Cyanophyceae</taxon>
        <taxon>Synechococcales</taxon>
        <taxon>Merismopediaceae</taxon>
        <taxon>Synechocystis</taxon>
    </lineage>
</organism>
<gene>
    <name type="ordered locus">slr0753</name>
</gene>
<name>Y753_SYNY3</name>
<protein>
    <recommendedName>
        <fullName>Uncharacterized transporter slr0753</fullName>
    </recommendedName>
</protein>
<feature type="chain" id="PRO_0000172516" description="Uncharacterized transporter slr0753">
    <location>
        <begin position="1"/>
        <end position="449"/>
    </location>
</feature>
<feature type="transmembrane region" description="Helical" evidence="1">
    <location>
        <begin position="1"/>
        <end position="21"/>
    </location>
</feature>
<feature type="transmembrane region" description="Helical" evidence="1">
    <location>
        <begin position="26"/>
        <end position="46"/>
    </location>
</feature>
<feature type="transmembrane region" description="Helical" evidence="1">
    <location>
        <begin position="51"/>
        <end position="71"/>
    </location>
</feature>
<feature type="transmembrane region" description="Helical" evidence="1">
    <location>
        <begin position="97"/>
        <end position="117"/>
    </location>
</feature>
<feature type="transmembrane region" description="Helical" evidence="1">
    <location>
        <begin position="137"/>
        <end position="157"/>
    </location>
</feature>
<feature type="transmembrane region" description="Helical" evidence="1">
    <location>
        <begin position="178"/>
        <end position="198"/>
    </location>
</feature>
<feature type="transmembrane region" description="Helical" evidence="1">
    <location>
        <begin position="223"/>
        <end position="243"/>
    </location>
</feature>
<feature type="transmembrane region" description="Helical" evidence="1">
    <location>
        <begin position="244"/>
        <end position="264"/>
    </location>
</feature>
<feature type="transmembrane region" description="Helical" evidence="1">
    <location>
        <begin position="285"/>
        <end position="305"/>
    </location>
</feature>
<feature type="transmembrane region" description="Helical" evidence="1">
    <location>
        <begin position="310"/>
        <end position="330"/>
    </location>
</feature>
<feature type="transmembrane region" description="Helical" evidence="1">
    <location>
        <begin position="340"/>
        <end position="360"/>
    </location>
</feature>
<feature type="transmembrane region" description="Helical" evidence="1">
    <location>
        <begin position="377"/>
        <end position="397"/>
    </location>
</feature>
<feature type="transmembrane region" description="Helical" evidence="1">
    <location>
        <begin position="425"/>
        <end position="445"/>
    </location>
</feature>
<evidence type="ECO:0000255" key="1"/>
<evidence type="ECO:0000305" key="2"/>
<dbReference type="EMBL" id="BA000022">
    <property type="protein sequence ID" value="BAA18751.1"/>
    <property type="molecule type" value="Genomic_DNA"/>
</dbReference>
<dbReference type="PIR" id="S76839">
    <property type="entry name" value="S76839"/>
</dbReference>
<dbReference type="SMR" id="P74635"/>
<dbReference type="FunCoup" id="P74635">
    <property type="interactions" value="207"/>
</dbReference>
<dbReference type="STRING" id="1148.gene:10500523"/>
<dbReference type="PaxDb" id="1148-1653841"/>
<dbReference type="EnsemblBacteria" id="BAA18751">
    <property type="protein sequence ID" value="BAA18751"/>
    <property type="gene ID" value="BAA18751"/>
</dbReference>
<dbReference type="KEGG" id="syn:slr0753"/>
<dbReference type="eggNOG" id="COG1055">
    <property type="taxonomic scope" value="Bacteria"/>
</dbReference>
<dbReference type="InParanoid" id="P74635"/>
<dbReference type="PhylomeDB" id="P74635"/>
<dbReference type="Proteomes" id="UP000001425">
    <property type="component" value="Chromosome"/>
</dbReference>
<dbReference type="GO" id="GO:0005886">
    <property type="term" value="C:plasma membrane"/>
    <property type="evidence" value="ECO:0007669"/>
    <property type="project" value="UniProtKB-SubCell"/>
</dbReference>
<dbReference type="GO" id="GO:0015105">
    <property type="term" value="F:arsenite transmembrane transporter activity"/>
    <property type="evidence" value="ECO:0007669"/>
    <property type="project" value="InterPro"/>
</dbReference>
<dbReference type="CDD" id="cd01116">
    <property type="entry name" value="P_permease"/>
    <property type="match status" value="1"/>
</dbReference>
<dbReference type="InterPro" id="IPR000802">
    <property type="entry name" value="Arsenical_pump_ArsB"/>
</dbReference>
<dbReference type="InterPro" id="IPR004680">
    <property type="entry name" value="Cit_transptr-like_dom"/>
</dbReference>
<dbReference type="InterPro" id="IPR051475">
    <property type="entry name" value="Diverse_Ion_Transporter"/>
</dbReference>
<dbReference type="PANTHER" id="PTHR43568">
    <property type="entry name" value="P PROTEIN"/>
    <property type="match status" value="1"/>
</dbReference>
<dbReference type="PANTHER" id="PTHR43568:SF1">
    <property type="entry name" value="P PROTEIN"/>
    <property type="match status" value="1"/>
</dbReference>
<dbReference type="Pfam" id="PF03600">
    <property type="entry name" value="CitMHS"/>
    <property type="match status" value="1"/>
</dbReference>
<dbReference type="PRINTS" id="PR00758">
    <property type="entry name" value="ARSENICPUMP"/>
</dbReference>
<proteinExistence type="inferred from homology"/>
<comment type="subcellular location">
    <subcellularLocation>
        <location evidence="2">Cell membrane</location>
        <topology evidence="2">Multi-pass membrane protein</topology>
    </subcellularLocation>
</comment>
<comment type="similarity">
    <text evidence="2">Belongs to the CitM (TC 2.A.11) transporter family.</text>
</comment>
<reference key="1">
    <citation type="journal article" date="1996" name="DNA Res.">
        <title>Sequence analysis of the genome of the unicellular cyanobacterium Synechocystis sp. strain PCC6803. II. Sequence determination of the entire genome and assignment of potential protein-coding regions.</title>
        <authorList>
            <person name="Kaneko T."/>
            <person name="Sato S."/>
            <person name="Kotani H."/>
            <person name="Tanaka A."/>
            <person name="Asamizu E."/>
            <person name="Nakamura Y."/>
            <person name="Miyajima N."/>
            <person name="Hirosawa M."/>
            <person name="Sugiura M."/>
            <person name="Sasamoto S."/>
            <person name="Kimura T."/>
            <person name="Hosouchi T."/>
            <person name="Matsuno A."/>
            <person name="Muraki A."/>
            <person name="Nakazaki N."/>
            <person name="Naruo K."/>
            <person name="Okumura S."/>
            <person name="Shimpo S."/>
            <person name="Takeuchi C."/>
            <person name="Wada T."/>
            <person name="Watanabe A."/>
            <person name="Yamada M."/>
            <person name="Yasuda M."/>
            <person name="Tabata S."/>
        </authorList>
    </citation>
    <scope>NUCLEOTIDE SEQUENCE [LARGE SCALE GENOMIC DNA]</scope>
    <source>
        <strain>ATCC 27184 / PCC 6803 / Kazusa</strain>
    </source>
</reference>
<keyword id="KW-1003">Cell membrane</keyword>
<keyword id="KW-0472">Membrane</keyword>
<keyword id="KW-1185">Reference proteome</keyword>
<keyword id="KW-0812">Transmembrane</keyword>
<keyword id="KW-1133">Transmembrane helix</keyword>
<keyword id="KW-0813">Transport</keyword>
<sequence>MVANLPALFSLGVFVGVILLIMSEKIHLTIAAFLGALILVFTHVITLKEGIDYISQSYATLALFFGVMVLVRSFEPTKIFEYLATQMVLLAKGSGKLLMLGVIAITTPICAVLPNATTVMLLAPLIPPLAQEIGVDFVPILILMVFVANSAGLLTLVGDPATFIVGDAINISFNDYLFKLSFMGVLAIVSIVVITPFLFRHIWRSRFTHLEDLPHPQINHPKVLMAGGVIITLVLIFFVIGESLPVPIPPASVALMGACLALLLASQSKIDTVHNILRDVDWSTLIFFMSIFVIIGSLEKTGVTASLAQLLAVVVGQNIAFGAIVLVFTVGLLSSVVPNIPLVVAMVPLLKQYVVNIGFAGPEILGANFDGQLPAEVLPLFYAMMFGATLGGNGTLVGASSNIVAAGISEQHGRPISFHRFLRYGLPVMAVQLVVAALFVAWLMFTQQG</sequence>
<accession>P74635</accession>